<keyword id="KW-0067">ATP-binding</keyword>
<keyword id="KW-0143">Chaperone</keyword>
<keyword id="KW-0963">Cytoplasm</keyword>
<keyword id="KW-0413">Isomerase</keyword>
<keyword id="KW-0547">Nucleotide-binding</keyword>
<keyword id="KW-1185">Reference proteome</keyword>
<proteinExistence type="inferred from homology"/>
<sequence length="547" mass="57639">MAAKDVKFDIDARNRMLKGVNILADAVKVTLGPKGRNVVLDKSFGAPRITKDGVSVAKEIELEDKFENMGAQMVKEVASRTNDEAGDGTTTATVLAQAIVKEGMKSVAAGMNPMDLKRGIDLATSKVVEAIKSAARPVNDSAEVAQVGTISANGESEIGQQIADAMQKVGNEGVITVEENKGLETETDVVEGMQFDRGYLSPYFVTNPDKMTTELEDAIILLHEKKLSSLQPMVPLLESVIQSGKPLLIIAEDVEGEALATLVVNKLRGGLKIAAVKAPGFGDRRKAMLQDIAILTGGQVISEDLGMKLESVTIDMLGSAKRVSITKDETTIVDGAGAKAEIEARVAQIRNQIEETTSDYDREKLQERVAKLAGGVAVIRVGGMTEVEVKERKDRVDDALNATRAAVQEGIVVGGGVALIQAAKHLDGLEGANNDQNIGINIVRKALEAPLRQIAENAGVDGSVVAGKIRESSDLAFGFNAQTEEYGDMFKFGVIDPAKVVRTALQDAASIAGLLITTEAMVADKPAKEGAGAGGGMPDMGGMGGMM</sequence>
<dbReference type="EC" id="5.6.1.7" evidence="1"/>
<dbReference type="EMBL" id="CP000830">
    <property type="protein sequence ID" value="ABV94652.1"/>
    <property type="molecule type" value="Genomic_DNA"/>
</dbReference>
<dbReference type="RefSeq" id="WP_012179580.1">
    <property type="nucleotide sequence ID" value="NC_009952.1"/>
</dbReference>
<dbReference type="SMR" id="A8LJP9"/>
<dbReference type="STRING" id="398580.Dshi_2919"/>
<dbReference type="KEGG" id="dsh:Dshi_2919"/>
<dbReference type="eggNOG" id="COG0459">
    <property type="taxonomic scope" value="Bacteria"/>
</dbReference>
<dbReference type="HOGENOM" id="CLU_016503_3_0_5"/>
<dbReference type="OrthoDB" id="9766614at2"/>
<dbReference type="Proteomes" id="UP000006833">
    <property type="component" value="Chromosome"/>
</dbReference>
<dbReference type="GO" id="GO:0005737">
    <property type="term" value="C:cytoplasm"/>
    <property type="evidence" value="ECO:0007669"/>
    <property type="project" value="UniProtKB-SubCell"/>
</dbReference>
<dbReference type="GO" id="GO:0005524">
    <property type="term" value="F:ATP binding"/>
    <property type="evidence" value="ECO:0007669"/>
    <property type="project" value="UniProtKB-UniRule"/>
</dbReference>
<dbReference type="GO" id="GO:0140662">
    <property type="term" value="F:ATP-dependent protein folding chaperone"/>
    <property type="evidence" value="ECO:0007669"/>
    <property type="project" value="InterPro"/>
</dbReference>
<dbReference type="GO" id="GO:0016853">
    <property type="term" value="F:isomerase activity"/>
    <property type="evidence" value="ECO:0007669"/>
    <property type="project" value="UniProtKB-KW"/>
</dbReference>
<dbReference type="GO" id="GO:0051082">
    <property type="term" value="F:unfolded protein binding"/>
    <property type="evidence" value="ECO:0007669"/>
    <property type="project" value="UniProtKB-UniRule"/>
</dbReference>
<dbReference type="GO" id="GO:0042026">
    <property type="term" value="P:protein refolding"/>
    <property type="evidence" value="ECO:0007669"/>
    <property type="project" value="UniProtKB-UniRule"/>
</dbReference>
<dbReference type="CDD" id="cd03344">
    <property type="entry name" value="GroEL"/>
    <property type="match status" value="1"/>
</dbReference>
<dbReference type="FunFam" id="1.10.560.10:FF:000001">
    <property type="entry name" value="60 kDa chaperonin"/>
    <property type="match status" value="1"/>
</dbReference>
<dbReference type="FunFam" id="3.50.7.10:FF:000001">
    <property type="entry name" value="60 kDa chaperonin"/>
    <property type="match status" value="1"/>
</dbReference>
<dbReference type="Gene3D" id="3.50.7.10">
    <property type="entry name" value="GroEL"/>
    <property type="match status" value="1"/>
</dbReference>
<dbReference type="Gene3D" id="1.10.560.10">
    <property type="entry name" value="GroEL-like equatorial domain"/>
    <property type="match status" value="1"/>
</dbReference>
<dbReference type="Gene3D" id="3.30.260.10">
    <property type="entry name" value="TCP-1-like chaperonin intermediate domain"/>
    <property type="match status" value="1"/>
</dbReference>
<dbReference type="HAMAP" id="MF_00600">
    <property type="entry name" value="CH60"/>
    <property type="match status" value="1"/>
</dbReference>
<dbReference type="InterPro" id="IPR018370">
    <property type="entry name" value="Chaperonin_Cpn60_CS"/>
</dbReference>
<dbReference type="InterPro" id="IPR001844">
    <property type="entry name" value="Cpn60/GroEL"/>
</dbReference>
<dbReference type="InterPro" id="IPR002423">
    <property type="entry name" value="Cpn60/GroEL/TCP-1"/>
</dbReference>
<dbReference type="InterPro" id="IPR027409">
    <property type="entry name" value="GroEL-like_apical_dom_sf"/>
</dbReference>
<dbReference type="InterPro" id="IPR027413">
    <property type="entry name" value="GROEL-like_equatorial_sf"/>
</dbReference>
<dbReference type="InterPro" id="IPR027410">
    <property type="entry name" value="TCP-1-like_intermed_sf"/>
</dbReference>
<dbReference type="NCBIfam" id="TIGR02348">
    <property type="entry name" value="GroEL"/>
    <property type="match status" value="1"/>
</dbReference>
<dbReference type="NCBIfam" id="NF000592">
    <property type="entry name" value="PRK00013.1"/>
    <property type="match status" value="1"/>
</dbReference>
<dbReference type="NCBIfam" id="NF009487">
    <property type="entry name" value="PRK12849.1"/>
    <property type="match status" value="1"/>
</dbReference>
<dbReference type="NCBIfam" id="NF009488">
    <property type="entry name" value="PRK12850.1"/>
    <property type="match status" value="1"/>
</dbReference>
<dbReference type="NCBIfam" id="NF009489">
    <property type="entry name" value="PRK12851.1"/>
    <property type="match status" value="1"/>
</dbReference>
<dbReference type="PANTHER" id="PTHR45633">
    <property type="entry name" value="60 KDA HEAT SHOCK PROTEIN, MITOCHONDRIAL"/>
    <property type="match status" value="1"/>
</dbReference>
<dbReference type="Pfam" id="PF00118">
    <property type="entry name" value="Cpn60_TCP1"/>
    <property type="match status" value="1"/>
</dbReference>
<dbReference type="PRINTS" id="PR00298">
    <property type="entry name" value="CHAPERONIN60"/>
</dbReference>
<dbReference type="SUPFAM" id="SSF52029">
    <property type="entry name" value="GroEL apical domain-like"/>
    <property type="match status" value="1"/>
</dbReference>
<dbReference type="SUPFAM" id="SSF48592">
    <property type="entry name" value="GroEL equatorial domain-like"/>
    <property type="match status" value="1"/>
</dbReference>
<dbReference type="SUPFAM" id="SSF54849">
    <property type="entry name" value="GroEL-intermediate domain like"/>
    <property type="match status" value="1"/>
</dbReference>
<dbReference type="PROSITE" id="PS00296">
    <property type="entry name" value="CHAPERONINS_CPN60"/>
    <property type="match status" value="1"/>
</dbReference>
<reference key="1">
    <citation type="journal article" date="2010" name="ISME J.">
        <title>The complete genome sequence of the algal symbiont Dinoroseobacter shibae: a hitchhiker's guide to life in the sea.</title>
        <authorList>
            <person name="Wagner-Dobler I."/>
            <person name="Ballhausen B."/>
            <person name="Berger M."/>
            <person name="Brinkhoff T."/>
            <person name="Buchholz I."/>
            <person name="Bunk B."/>
            <person name="Cypionka H."/>
            <person name="Daniel R."/>
            <person name="Drepper T."/>
            <person name="Gerdts G."/>
            <person name="Hahnke S."/>
            <person name="Han C."/>
            <person name="Jahn D."/>
            <person name="Kalhoefer D."/>
            <person name="Kiss H."/>
            <person name="Klenk H.P."/>
            <person name="Kyrpides N."/>
            <person name="Liebl W."/>
            <person name="Liesegang H."/>
            <person name="Meincke L."/>
            <person name="Pati A."/>
            <person name="Petersen J."/>
            <person name="Piekarski T."/>
            <person name="Pommerenke C."/>
            <person name="Pradella S."/>
            <person name="Pukall R."/>
            <person name="Rabus R."/>
            <person name="Stackebrandt E."/>
            <person name="Thole S."/>
            <person name="Thompson L."/>
            <person name="Tielen P."/>
            <person name="Tomasch J."/>
            <person name="von Jan M."/>
            <person name="Wanphrut N."/>
            <person name="Wichels A."/>
            <person name="Zech H."/>
            <person name="Simon M."/>
        </authorList>
    </citation>
    <scope>NUCLEOTIDE SEQUENCE [LARGE SCALE GENOMIC DNA]</scope>
    <source>
        <strain>DSM 16493 / NCIMB 14021 / DFL 12</strain>
    </source>
</reference>
<feature type="chain" id="PRO_1000082473" description="Chaperonin GroEL">
    <location>
        <begin position="1"/>
        <end position="547"/>
    </location>
</feature>
<feature type="region of interest" description="Disordered" evidence="2">
    <location>
        <begin position="528"/>
        <end position="547"/>
    </location>
</feature>
<feature type="compositionally biased region" description="Gly residues" evidence="2">
    <location>
        <begin position="531"/>
        <end position="547"/>
    </location>
</feature>
<feature type="binding site" evidence="1">
    <location>
        <begin position="30"/>
        <end position="33"/>
    </location>
    <ligand>
        <name>ATP</name>
        <dbReference type="ChEBI" id="CHEBI:30616"/>
    </ligand>
</feature>
<feature type="binding site" evidence="1">
    <location>
        <position position="51"/>
    </location>
    <ligand>
        <name>ATP</name>
        <dbReference type="ChEBI" id="CHEBI:30616"/>
    </ligand>
</feature>
<feature type="binding site" evidence="1">
    <location>
        <begin position="87"/>
        <end position="91"/>
    </location>
    <ligand>
        <name>ATP</name>
        <dbReference type="ChEBI" id="CHEBI:30616"/>
    </ligand>
</feature>
<feature type="binding site" evidence="1">
    <location>
        <position position="415"/>
    </location>
    <ligand>
        <name>ATP</name>
        <dbReference type="ChEBI" id="CHEBI:30616"/>
    </ligand>
</feature>
<feature type="binding site" evidence="1">
    <location>
        <position position="496"/>
    </location>
    <ligand>
        <name>ATP</name>
        <dbReference type="ChEBI" id="CHEBI:30616"/>
    </ligand>
</feature>
<organism>
    <name type="scientific">Dinoroseobacter shibae (strain DSM 16493 / NCIMB 14021 / DFL 12)</name>
    <dbReference type="NCBI Taxonomy" id="398580"/>
    <lineage>
        <taxon>Bacteria</taxon>
        <taxon>Pseudomonadati</taxon>
        <taxon>Pseudomonadota</taxon>
        <taxon>Alphaproteobacteria</taxon>
        <taxon>Rhodobacterales</taxon>
        <taxon>Roseobacteraceae</taxon>
        <taxon>Dinoroseobacter</taxon>
    </lineage>
</organism>
<gene>
    <name evidence="1" type="primary">groEL</name>
    <name evidence="1" type="synonym">groL</name>
    <name type="ordered locus">Dshi_2919</name>
</gene>
<accession>A8LJP9</accession>
<name>CH60_DINSH</name>
<evidence type="ECO:0000255" key="1">
    <source>
        <dbReference type="HAMAP-Rule" id="MF_00600"/>
    </source>
</evidence>
<evidence type="ECO:0000256" key="2">
    <source>
        <dbReference type="SAM" id="MobiDB-lite"/>
    </source>
</evidence>
<protein>
    <recommendedName>
        <fullName evidence="1">Chaperonin GroEL</fullName>
        <ecNumber evidence="1">5.6.1.7</ecNumber>
    </recommendedName>
    <alternativeName>
        <fullName evidence="1">60 kDa chaperonin</fullName>
    </alternativeName>
    <alternativeName>
        <fullName evidence="1">Chaperonin-60</fullName>
        <shortName evidence="1">Cpn60</shortName>
    </alternativeName>
</protein>
<comment type="function">
    <text evidence="1">Together with its co-chaperonin GroES, plays an essential role in assisting protein folding. The GroEL-GroES system forms a nano-cage that allows encapsulation of the non-native substrate proteins and provides a physical environment optimized to promote and accelerate protein folding.</text>
</comment>
<comment type="catalytic activity">
    <reaction evidence="1">
        <text>ATP + H2O + a folded polypeptide = ADP + phosphate + an unfolded polypeptide.</text>
        <dbReference type="EC" id="5.6.1.7"/>
    </reaction>
</comment>
<comment type="subunit">
    <text evidence="1">Forms a cylinder of 14 subunits composed of two heptameric rings stacked back-to-back. Interacts with the co-chaperonin GroES.</text>
</comment>
<comment type="subcellular location">
    <subcellularLocation>
        <location evidence="1">Cytoplasm</location>
    </subcellularLocation>
</comment>
<comment type="similarity">
    <text evidence="1">Belongs to the chaperonin (HSP60) family.</text>
</comment>